<proteinExistence type="inferred from homology"/>
<gene>
    <name evidence="1" type="primary">hemA</name>
    <name type="ordered locus">Sputw3181_3375</name>
</gene>
<protein>
    <recommendedName>
        <fullName evidence="1">Glutamyl-tRNA reductase</fullName>
        <shortName evidence="1">GluTR</shortName>
        <ecNumber evidence="1">1.2.1.70</ecNumber>
    </recommendedName>
</protein>
<dbReference type="EC" id="1.2.1.70" evidence="1"/>
<dbReference type="EMBL" id="CP000503">
    <property type="protein sequence ID" value="ABM26187.1"/>
    <property type="molecule type" value="Genomic_DNA"/>
</dbReference>
<dbReference type="RefSeq" id="WP_011790631.1">
    <property type="nucleotide sequence ID" value="NC_008750.1"/>
</dbReference>
<dbReference type="SMR" id="A1RNE2"/>
<dbReference type="GeneID" id="67442307"/>
<dbReference type="KEGG" id="shw:Sputw3181_3375"/>
<dbReference type="HOGENOM" id="CLU_035113_2_2_6"/>
<dbReference type="UniPathway" id="UPA00251">
    <property type="reaction ID" value="UER00316"/>
</dbReference>
<dbReference type="Proteomes" id="UP000002597">
    <property type="component" value="Chromosome"/>
</dbReference>
<dbReference type="GO" id="GO:0008883">
    <property type="term" value="F:glutamyl-tRNA reductase activity"/>
    <property type="evidence" value="ECO:0007669"/>
    <property type="project" value="UniProtKB-UniRule"/>
</dbReference>
<dbReference type="GO" id="GO:0050661">
    <property type="term" value="F:NADP binding"/>
    <property type="evidence" value="ECO:0007669"/>
    <property type="project" value="InterPro"/>
</dbReference>
<dbReference type="GO" id="GO:0019353">
    <property type="term" value="P:protoporphyrinogen IX biosynthetic process from glutamate"/>
    <property type="evidence" value="ECO:0007669"/>
    <property type="project" value="TreeGrafter"/>
</dbReference>
<dbReference type="CDD" id="cd05213">
    <property type="entry name" value="NAD_bind_Glutamyl_tRNA_reduct"/>
    <property type="match status" value="1"/>
</dbReference>
<dbReference type="FunFam" id="3.30.460.30:FF:000001">
    <property type="entry name" value="Glutamyl-tRNA reductase"/>
    <property type="match status" value="1"/>
</dbReference>
<dbReference type="FunFam" id="3.40.50.720:FF:000031">
    <property type="entry name" value="Glutamyl-tRNA reductase"/>
    <property type="match status" value="1"/>
</dbReference>
<dbReference type="Gene3D" id="3.30.460.30">
    <property type="entry name" value="Glutamyl-tRNA reductase, N-terminal domain"/>
    <property type="match status" value="1"/>
</dbReference>
<dbReference type="Gene3D" id="3.40.50.720">
    <property type="entry name" value="NAD(P)-binding Rossmann-like Domain"/>
    <property type="match status" value="1"/>
</dbReference>
<dbReference type="HAMAP" id="MF_00087">
    <property type="entry name" value="Glu_tRNA_reductase"/>
    <property type="match status" value="1"/>
</dbReference>
<dbReference type="InterPro" id="IPR000343">
    <property type="entry name" value="4pyrrol_synth_GluRdtase"/>
</dbReference>
<dbReference type="InterPro" id="IPR015896">
    <property type="entry name" value="4pyrrol_synth_GluRdtase_dimer"/>
</dbReference>
<dbReference type="InterPro" id="IPR015895">
    <property type="entry name" value="4pyrrol_synth_GluRdtase_N"/>
</dbReference>
<dbReference type="InterPro" id="IPR018214">
    <property type="entry name" value="GluRdtase_CS"/>
</dbReference>
<dbReference type="InterPro" id="IPR036453">
    <property type="entry name" value="GluRdtase_dimer_dom_sf"/>
</dbReference>
<dbReference type="InterPro" id="IPR036343">
    <property type="entry name" value="GluRdtase_N_sf"/>
</dbReference>
<dbReference type="InterPro" id="IPR036291">
    <property type="entry name" value="NAD(P)-bd_dom_sf"/>
</dbReference>
<dbReference type="InterPro" id="IPR006151">
    <property type="entry name" value="Shikm_DH/Glu-tRNA_Rdtase"/>
</dbReference>
<dbReference type="NCBIfam" id="TIGR01035">
    <property type="entry name" value="hemA"/>
    <property type="match status" value="1"/>
</dbReference>
<dbReference type="PANTHER" id="PTHR43013">
    <property type="entry name" value="GLUTAMYL-TRNA REDUCTASE"/>
    <property type="match status" value="1"/>
</dbReference>
<dbReference type="PANTHER" id="PTHR43013:SF1">
    <property type="entry name" value="GLUTAMYL-TRNA REDUCTASE"/>
    <property type="match status" value="1"/>
</dbReference>
<dbReference type="Pfam" id="PF00745">
    <property type="entry name" value="GlutR_dimer"/>
    <property type="match status" value="1"/>
</dbReference>
<dbReference type="Pfam" id="PF05201">
    <property type="entry name" value="GlutR_N"/>
    <property type="match status" value="1"/>
</dbReference>
<dbReference type="Pfam" id="PF01488">
    <property type="entry name" value="Shikimate_DH"/>
    <property type="match status" value="1"/>
</dbReference>
<dbReference type="PIRSF" id="PIRSF000445">
    <property type="entry name" value="4pyrrol_synth_GluRdtase"/>
    <property type="match status" value="1"/>
</dbReference>
<dbReference type="SUPFAM" id="SSF69742">
    <property type="entry name" value="Glutamyl tRNA-reductase catalytic, N-terminal domain"/>
    <property type="match status" value="1"/>
</dbReference>
<dbReference type="SUPFAM" id="SSF69075">
    <property type="entry name" value="Glutamyl tRNA-reductase dimerization domain"/>
    <property type="match status" value="1"/>
</dbReference>
<dbReference type="SUPFAM" id="SSF51735">
    <property type="entry name" value="NAD(P)-binding Rossmann-fold domains"/>
    <property type="match status" value="1"/>
</dbReference>
<dbReference type="PROSITE" id="PS00747">
    <property type="entry name" value="GLUTR"/>
    <property type="match status" value="1"/>
</dbReference>
<sequence>MSLVAIGINHKTATVDLREKVAFSPDKIHDAMKSLASRTRSGEAVIVSTCNRTELYCNNGDEADIIEWLEEYHGLDHKDVAPCLYNYHGQTAVKHLMRVASGLDSLILGEPQILGQVKQAFAKAKEAGTVALTIDRLFQNTFSVAKKVRTETEIGAAAVSVAFAAVSMAKHIFSSLSTTKVLLIGAGETIELVAKHLKDNGVASMVVANRTLERAQGMCEEFGATAITLAQIPDYLPKADIVISSTASPLPILGKGMVEKALKQRRHQPMLLVDIAVPRDIEPEVADLDDAFLYTVDDLHSIIEQNMASRKEAAEQAELITEEQSYLFMDWVRSLESVDSIREYRNQSMAIKDELVERALNKLAQGGDTEQVLIELANRLTNKLIHAPTQALTAASRQGDLNTLGQLRTALGLDKN</sequence>
<evidence type="ECO:0000255" key="1">
    <source>
        <dbReference type="HAMAP-Rule" id="MF_00087"/>
    </source>
</evidence>
<accession>A1RNE2</accession>
<reference key="1">
    <citation type="submission" date="2006-12" db="EMBL/GenBank/DDBJ databases">
        <title>Complete sequence of Shewanella sp. W3-18-1.</title>
        <authorList>
            <consortium name="US DOE Joint Genome Institute"/>
            <person name="Copeland A."/>
            <person name="Lucas S."/>
            <person name="Lapidus A."/>
            <person name="Barry K."/>
            <person name="Detter J.C."/>
            <person name="Glavina del Rio T."/>
            <person name="Hammon N."/>
            <person name="Israni S."/>
            <person name="Dalin E."/>
            <person name="Tice H."/>
            <person name="Pitluck S."/>
            <person name="Chain P."/>
            <person name="Malfatti S."/>
            <person name="Shin M."/>
            <person name="Vergez L."/>
            <person name="Schmutz J."/>
            <person name="Larimer F."/>
            <person name="Land M."/>
            <person name="Hauser L."/>
            <person name="Kyrpides N."/>
            <person name="Lykidis A."/>
            <person name="Tiedje J."/>
            <person name="Richardson P."/>
        </authorList>
    </citation>
    <scope>NUCLEOTIDE SEQUENCE [LARGE SCALE GENOMIC DNA]</scope>
    <source>
        <strain>W3-18-1</strain>
    </source>
</reference>
<keyword id="KW-0521">NADP</keyword>
<keyword id="KW-0560">Oxidoreductase</keyword>
<keyword id="KW-0627">Porphyrin biosynthesis</keyword>
<organism>
    <name type="scientific">Shewanella sp. (strain W3-18-1)</name>
    <dbReference type="NCBI Taxonomy" id="351745"/>
    <lineage>
        <taxon>Bacteria</taxon>
        <taxon>Pseudomonadati</taxon>
        <taxon>Pseudomonadota</taxon>
        <taxon>Gammaproteobacteria</taxon>
        <taxon>Alteromonadales</taxon>
        <taxon>Shewanellaceae</taxon>
        <taxon>Shewanella</taxon>
    </lineage>
</organism>
<feature type="chain" id="PRO_1000004695" description="Glutamyl-tRNA reductase">
    <location>
        <begin position="1"/>
        <end position="416"/>
    </location>
</feature>
<feature type="active site" description="Nucleophile" evidence="1">
    <location>
        <position position="50"/>
    </location>
</feature>
<feature type="binding site" evidence="1">
    <location>
        <begin position="49"/>
        <end position="52"/>
    </location>
    <ligand>
        <name>substrate</name>
    </ligand>
</feature>
<feature type="binding site" evidence="1">
    <location>
        <position position="105"/>
    </location>
    <ligand>
        <name>substrate</name>
    </ligand>
</feature>
<feature type="binding site" evidence="1">
    <location>
        <begin position="110"/>
        <end position="112"/>
    </location>
    <ligand>
        <name>substrate</name>
    </ligand>
</feature>
<feature type="binding site" evidence="1">
    <location>
        <position position="116"/>
    </location>
    <ligand>
        <name>substrate</name>
    </ligand>
</feature>
<feature type="binding site" evidence="1">
    <location>
        <begin position="185"/>
        <end position="190"/>
    </location>
    <ligand>
        <name>NADP(+)</name>
        <dbReference type="ChEBI" id="CHEBI:58349"/>
    </ligand>
</feature>
<feature type="site" description="Important for activity" evidence="1">
    <location>
        <position position="95"/>
    </location>
</feature>
<name>HEM1_SHESW</name>
<comment type="function">
    <text evidence="1">Catalyzes the NADPH-dependent reduction of glutamyl-tRNA(Glu) to glutamate 1-semialdehyde (GSA).</text>
</comment>
<comment type="catalytic activity">
    <reaction evidence="1">
        <text>(S)-4-amino-5-oxopentanoate + tRNA(Glu) + NADP(+) = L-glutamyl-tRNA(Glu) + NADPH + H(+)</text>
        <dbReference type="Rhea" id="RHEA:12344"/>
        <dbReference type="Rhea" id="RHEA-COMP:9663"/>
        <dbReference type="Rhea" id="RHEA-COMP:9680"/>
        <dbReference type="ChEBI" id="CHEBI:15378"/>
        <dbReference type="ChEBI" id="CHEBI:57501"/>
        <dbReference type="ChEBI" id="CHEBI:57783"/>
        <dbReference type="ChEBI" id="CHEBI:58349"/>
        <dbReference type="ChEBI" id="CHEBI:78442"/>
        <dbReference type="ChEBI" id="CHEBI:78520"/>
        <dbReference type="EC" id="1.2.1.70"/>
    </reaction>
</comment>
<comment type="pathway">
    <text evidence="1">Porphyrin-containing compound metabolism; protoporphyrin-IX biosynthesis; 5-aminolevulinate from L-glutamyl-tRNA(Glu): step 1/2.</text>
</comment>
<comment type="subunit">
    <text evidence="1">Homodimer.</text>
</comment>
<comment type="domain">
    <text evidence="1">Possesses an unusual extended V-shaped dimeric structure with each monomer consisting of three distinct domains arranged along a curved 'spinal' alpha-helix. The N-terminal catalytic domain specifically recognizes the glutamate moiety of the substrate. The second domain is the NADPH-binding domain, and the third C-terminal domain is responsible for dimerization.</text>
</comment>
<comment type="miscellaneous">
    <text evidence="1">During catalysis, the active site Cys acts as a nucleophile attacking the alpha-carbonyl group of tRNA-bound glutamate with the formation of a thioester intermediate between enzyme and glutamate, and the concomitant release of tRNA(Glu). The thioester intermediate is finally reduced by direct hydride transfer from NADPH, to form the product GSA.</text>
</comment>
<comment type="similarity">
    <text evidence="1">Belongs to the glutamyl-tRNA reductase family.</text>
</comment>